<protein>
    <recommendedName>
        <fullName evidence="1">Phosphopantetheine adenylyltransferase</fullName>
        <ecNumber evidence="1">2.7.7.3</ecNumber>
    </recommendedName>
    <alternativeName>
        <fullName evidence="1">Dephospho-CoA pyrophosphorylase</fullName>
    </alternativeName>
    <alternativeName>
        <fullName evidence="1">Pantetheine-phosphate adenylyltransferase</fullName>
        <shortName evidence="1">PPAT</shortName>
    </alternativeName>
</protein>
<name>COAD_BACC7</name>
<feature type="chain" id="PRO_1000118069" description="Phosphopantetheine adenylyltransferase">
    <location>
        <begin position="1"/>
        <end position="163"/>
    </location>
</feature>
<feature type="binding site" evidence="1">
    <location>
        <begin position="10"/>
        <end position="11"/>
    </location>
    <ligand>
        <name>ATP</name>
        <dbReference type="ChEBI" id="CHEBI:30616"/>
    </ligand>
</feature>
<feature type="binding site" evidence="1">
    <location>
        <position position="10"/>
    </location>
    <ligand>
        <name>substrate</name>
    </ligand>
</feature>
<feature type="binding site" evidence="1">
    <location>
        <position position="18"/>
    </location>
    <ligand>
        <name>ATP</name>
        <dbReference type="ChEBI" id="CHEBI:30616"/>
    </ligand>
</feature>
<feature type="binding site" evidence="1">
    <location>
        <position position="42"/>
    </location>
    <ligand>
        <name>substrate</name>
    </ligand>
</feature>
<feature type="binding site" evidence="1">
    <location>
        <position position="74"/>
    </location>
    <ligand>
        <name>substrate</name>
    </ligand>
</feature>
<feature type="binding site" evidence="1">
    <location>
        <position position="88"/>
    </location>
    <ligand>
        <name>substrate</name>
    </ligand>
</feature>
<feature type="binding site" evidence="1">
    <location>
        <begin position="89"/>
        <end position="91"/>
    </location>
    <ligand>
        <name>ATP</name>
        <dbReference type="ChEBI" id="CHEBI:30616"/>
    </ligand>
</feature>
<feature type="binding site" evidence="1">
    <location>
        <position position="99"/>
    </location>
    <ligand>
        <name>ATP</name>
        <dbReference type="ChEBI" id="CHEBI:30616"/>
    </ligand>
</feature>
<feature type="binding site" evidence="1">
    <location>
        <begin position="124"/>
        <end position="130"/>
    </location>
    <ligand>
        <name>ATP</name>
        <dbReference type="ChEBI" id="CHEBI:30616"/>
    </ligand>
</feature>
<feature type="site" description="Transition state stabilizer" evidence="1">
    <location>
        <position position="18"/>
    </location>
</feature>
<accession>B7HMA9</accession>
<dbReference type="EC" id="2.7.7.3" evidence="1"/>
<dbReference type="EMBL" id="CP001177">
    <property type="protein sequence ID" value="ACJ77736.1"/>
    <property type="molecule type" value="Genomic_DNA"/>
</dbReference>
<dbReference type="SMR" id="B7HMA9"/>
<dbReference type="KEGG" id="bcr:BCAH187_A4041"/>
<dbReference type="HOGENOM" id="CLU_100149_0_1_9"/>
<dbReference type="UniPathway" id="UPA00241">
    <property type="reaction ID" value="UER00355"/>
</dbReference>
<dbReference type="Proteomes" id="UP000002214">
    <property type="component" value="Chromosome"/>
</dbReference>
<dbReference type="GO" id="GO:0005737">
    <property type="term" value="C:cytoplasm"/>
    <property type="evidence" value="ECO:0007669"/>
    <property type="project" value="UniProtKB-SubCell"/>
</dbReference>
<dbReference type="GO" id="GO:0005524">
    <property type="term" value="F:ATP binding"/>
    <property type="evidence" value="ECO:0007669"/>
    <property type="project" value="UniProtKB-KW"/>
</dbReference>
<dbReference type="GO" id="GO:0004595">
    <property type="term" value="F:pantetheine-phosphate adenylyltransferase activity"/>
    <property type="evidence" value="ECO:0007669"/>
    <property type="project" value="UniProtKB-UniRule"/>
</dbReference>
<dbReference type="GO" id="GO:0015937">
    <property type="term" value="P:coenzyme A biosynthetic process"/>
    <property type="evidence" value="ECO:0007669"/>
    <property type="project" value="UniProtKB-UniRule"/>
</dbReference>
<dbReference type="CDD" id="cd02163">
    <property type="entry name" value="PPAT"/>
    <property type="match status" value="1"/>
</dbReference>
<dbReference type="FunFam" id="3.40.50.620:FF:000012">
    <property type="entry name" value="Phosphopantetheine adenylyltransferase"/>
    <property type="match status" value="1"/>
</dbReference>
<dbReference type="Gene3D" id="3.40.50.620">
    <property type="entry name" value="HUPs"/>
    <property type="match status" value="1"/>
</dbReference>
<dbReference type="HAMAP" id="MF_00151">
    <property type="entry name" value="PPAT_bact"/>
    <property type="match status" value="1"/>
</dbReference>
<dbReference type="InterPro" id="IPR004821">
    <property type="entry name" value="Cyt_trans-like"/>
</dbReference>
<dbReference type="InterPro" id="IPR001980">
    <property type="entry name" value="PPAT"/>
</dbReference>
<dbReference type="InterPro" id="IPR014729">
    <property type="entry name" value="Rossmann-like_a/b/a_fold"/>
</dbReference>
<dbReference type="NCBIfam" id="TIGR01510">
    <property type="entry name" value="coaD_prev_kdtB"/>
    <property type="match status" value="1"/>
</dbReference>
<dbReference type="NCBIfam" id="TIGR00125">
    <property type="entry name" value="cyt_tran_rel"/>
    <property type="match status" value="1"/>
</dbReference>
<dbReference type="PANTHER" id="PTHR21342">
    <property type="entry name" value="PHOSPHOPANTETHEINE ADENYLYLTRANSFERASE"/>
    <property type="match status" value="1"/>
</dbReference>
<dbReference type="PANTHER" id="PTHR21342:SF1">
    <property type="entry name" value="PHOSPHOPANTETHEINE ADENYLYLTRANSFERASE"/>
    <property type="match status" value="1"/>
</dbReference>
<dbReference type="Pfam" id="PF01467">
    <property type="entry name" value="CTP_transf_like"/>
    <property type="match status" value="1"/>
</dbReference>
<dbReference type="PRINTS" id="PR01020">
    <property type="entry name" value="LPSBIOSNTHSS"/>
</dbReference>
<dbReference type="SUPFAM" id="SSF52374">
    <property type="entry name" value="Nucleotidylyl transferase"/>
    <property type="match status" value="1"/>
</dbReference>
<organism>
    <name type="scientific">Bacillus cereus (strain AH187)</name>
    <dbReference type="NCBI Taxonomy" id="405534"/>
    <lineage>
        <taxon>Bacteria</taxon>
        <taxon>Bacillati</taxon>
        <taxon>Bacillota</taxon>
        <taxon>Bacilli</taxon>
        <taxon>Bacillales</taxon>
        <taxon>Bacillaceae</taxon>
        <taxon>Bacillus</taxon>
        <taxon>Bacillus cereus group</taxon>
    </lineage>
</organism>
<gene>
    <name evidence="1" type="primary">coaD</name>
    <name type="ordered locus">BCAH187_A4041</name>
</gene>
<sequence length="163" mass="18379">MTSIAISSGSFDPITLGHLDIIKRGAKVFDEVYVVVLNNSSKKPFFSVEERLDLIREATKDIPNVKVDSHSGLLVEYAKMRNANAILRGLRAVSDFEYEMQITSMNRKLDENIETFFIMTNNQYSFLSSSIVKEVARYGGSVVDLVPPVVERALKEKFQTPLK</sequence>
<comment type="function">
    <text evidence="1">Reversibly transfers an adenylyl group from ATP to 4'-phosphopantetheine, yielding dephospho-CoA (dPCoA) and pyrophosphate.</text>
</comment>
<comment type="catalytic activity">
    <reaction evidence="1">
        <text>(R)-4'-phosphopantetheine + ATP + H(+) = 3'-dephospho-CoA + diphosphate</text>
        <dbReference type="Rhea" id="RHEA:19801"/>
        <dbReference type="ChEBI" id="CHEBI:15378"/>
        <dbReference type="ChEBI" id="CHEBI:30616"/>
        <dbReference type="ChEBI" id="CHEBI:33019"/>
        <dbReference type="ChEBI" id="CHEBI:57328"/>
        <dbReference type="ChEBI" id="CHEBI:61723"/>
        <dbReference type="EC" id="2.7.7.3"/>
    </reaction>
</comment>
<comment type="cofactor">
    <cofactor evidence="1">
        <name>Mg(2+)</name>
        <dbReference type="ChEBI" id="CHEBI:18420"/>
    </cofactor>
</comment>
<comment type="pathway">
    <text evidence="1">Cofactor biosynthesis; coenzyme A biosynthesis; CoA from (R)-pantothenate: step 4/5.</text>
</comment>
<comment type="subunit">
    <text evidence="1">Homohexamer.</text>
</comment>
<comment type="subcellular location">
    <subcellularLocation>
        <location evidence="1">Cytoplasm</location>
    </subcellularLocation>
</comment>
<comment type="similarity">
    <text evidence="1">Belongs to the bacterial CoaD family.</text>
</comment>
<keyword id="KW-0067">ATP-binding</keyword>
<keyword id="KW-0173">Coenzyme A biosynthesis</keyword>
<keyword id="KW-0963">Cytoplasm</keyword>
<keyword id="KW-0460">Magnesium</keyword>
<keyword id="KW-0547">Nucleotide-binding</keyword>
<keyword id="KW-0548">Nucleotidyltransferase</keyword>
<keyword id="KW-0808">Transferase</keyword>
<proteinExistence type="inferred from homology"/>
<evidence type="ECO:0000255" key="1">
    <source>
        <dbReference type="HAMAP-Rule" id="MF_00151"/>
    </source>
</evidence>
<reference key="1">
    <citation type="submission" date="2008-10" db="EMBL/GenBank/DDBJ databases">
        <title>Genome sequence of Bacillus cereus AH187.</title>
        <authorList>
            <person name="Dodson R.J."/>
            <person name="Durkin A.S."/>
            <person name="Rosovitz M.J."/>
            <person name="Rasko D.A."/>
            <person name="Kolsto A.B."/>
            <person name="Okstad O.A."/>
            <person name="Ravel J."/>
            <person name="Sutton G."/>
        </authorList>
    </citation>
    <scope>NUCLEOTIDE SEQUENCE [LARGE SCALE GENOMIC DNA]</scope>
    <source>
        <strain>AH187</strain>
    </source>
</reference>